<accession>Q6ZIB5</accession>
<accession>Q0J484</accession>
<comment type="function">
    <text evidence="5">May act as a component of the auxin efflux carrier.</text>
</comment>
<comment type="subcellular location">
    <subcellularLocation>
        <location evidence="1">Membrane</location>
        <topology evidence="1">Multi-pass membrane protein</topology>
    </subcellularLocation>
</comment>
<comment type="tissue specificity">
    <text evidence="2">Expressed in roots, leaves, shoot apex and panicles.</text>
</comment>
<comment type="similarity">
    <text evidence="5">Belongs to the auxin efflux carrier (TC 2.A.69.1) family.</text>
</comment>
<gene>
    <name evidence="4" type="primary">PIN5C</name>
    <name evidence="7" type="ordered locus">Os08g0529000</name>
    <name evidence="5" type="ordered locus">LOC_Os08g41720</name>
    <name evidence="6" type="ORF">OJ1770_H02.15</name>
</gene>
<evidence type="ECO:0000255" key="1"/>
<evidence type="ECO:0000269" key="2">
    <source ref="5"/>
</evidence>
<evidence type="ECO:0000303" key="3">
    <source>
    </source>
</evidence>
<evidence type="ECO:0000303" key="4">
    <source ref="5"/>
</evidence>
<evidence type="ECO:0000305" key="5"/>
<evidence type="ECO:0000312" key="6">
    <source>
        <dbReference type="EMBL" id="BAD09105.1"/>
    </source>
</evidence>
<evidence type="ECO:0000312" key="7">
    <source>
        <dbReference type="EMBL" id="BAT06374.1"/>
    </source>
</evidence>
<feature type="chain" id="PRO_0000123794" description="Probable auxin efflux carrier component 5c">
    <location>
        <begin position="1"/>
        <end position="370"/>
    </location>
</feature>
<feature type="transmembrane region" description="Helical" evidence="1">
    <location>
        <begin position="7"/>
        <end position="27"/>
    </location>
</feature>
<feature type="transmembrane region" description="Helical" evidence="1">
    <location>
        <begin position="40"/>
        <end position="60"/>
    </location>
</feature>
<feature type="transmembrane region" description="Helical" evidence="1">
    <location>
        <begin position="70"/>
        <end position="90"/>
    </location>
</feature>
<feature type="transmembrane region" description="Helical" evidence="1">
    <location>
        <begin position="107"/>
        <end position="127"/>
    </location>
</feature>
<feature type="transmembrane region" description="Helical" evidence="1">
    <location>
        <begin position="138"/>
        <end position="158"/>
    </location>
</feature>
<feature type="transmembrane region" description="Helical" evidence="1">
    <location>
        <begin position="230"/>
        <end position="250"/>
    </location>
</feature>
<feature type="transmembrane region" description="Helical" evidence="1">
    <location>
        <begin position="254"/>
        <end position="274"/>
    </location>
</feature>
<feature type="transmembrane region" description="Helical" evidence="1">
    <location>
        <begin position="289"/>
        <end position="309"/>
    </location>
</feature>
<feature type="transmembrane region" description="Helical" evidence="1">
    <location>
        <begin position="315"/>
        <end position="335"/>
    </location>
</feature>
<feature type="transmembrane region" description="Helical" evidence="1">
    <location>
        <begin position="349"/>
        <end position="369"/>
    </location>
</feature>
<protein>
    <recommendedName>
        <fullName evidence="5">Probable auxin efflux carrier component 5c</fullName>
        <shortName evidence="4">OsPIN5c</shortName>
    </recommendedName>
    <alternativeName>
        <fullName evidence="3">OsPIN5b</fullName>
    </alternativeName>
</protein>
<keyword id="KW-0927">Auxin signaling pathway</keyword>
<keyword id="KW-0472">Membrane</keyword>
<keyword id="KW-1185">Reference proteome</keyword>
<keyword id="KW-0812">Transmembrane</keyword>
<keyword id="KW-1133">Transmembrane helix</keyword>
<keyword id="KW-0813">Transport</keyword>
<reference key="1">
    <citation type="journal article" date="2005" name="Nature">
        <title>The map-based sequence of the rice genome.</title>
        <authorList>
            <consortium name="International rice genome sequencing project (IRGSP)"/>
        </authorList>
    </citation>
    <scope>NUCLEOTIDE SEQUENCE [LARGE SCALE GENOMIC DNA]</scope>
    <source>
        <strain>cv. Nipponbare</strain>
    </source>
</reference>
<reference key="2">
    <citation type="journal article" date="2008" name="Nucleic Acids Res.">
        <title>The rice annotation project database (RAP-DB): 2008 update.</title>
        <authorList>
            <consortium name="The rice annotation project (RAP)"/>
        </authorList>
    </citation>
    <scope>GENOME REANNOTATION</scope>
    <source>
        <strain>cv. Nipponbare</strain>
    </source>
</reference>
<reference key="3">
    <citation type="journal article" date="2013" name="Rice">
        <title>Improvement of the Oryza sativa Nipponbare reference genome using next generation sequence and optical map data.</title>
        <authorList>
            <person name="Kawahara Y."/>
            <person name="de la Bastide M."/>
            <person name="Hamilton J.P."/>
            <person name="Kanamori H."/>
            <person name="McCombie W.R."/>
            <person name="Ouyang S."/>
            <person name="Schwartz D.C."/>
            <person name="Tanaka T."/>
            <person name="Wu J."/>
            <person name="Zhou S."/>
            <person name="Childs K.L."/>
            <person name="Davidson R.M."/>
            <person name="Lin H."/>
            <person name="Quesada-Ocampo L."/>
            <person name="Vaillancourt B."/>
            <person name="Sakai H."/>
            <person name="Lee S.S."/>
            <person name="Kim J."/>
            <person name="Numa H."/>
            <person name="Itoh T."/>
            <person name="Buell C.R."/>
            <person name="Matsumoto T."/>
        </authorList>
    </citation>
    <scope>GENOME REANNOTATION</scope>
    <source>
        <strain>cv. Nipponbare</strain>
    </source>
</reference>
<reference key="4">
    <citation type="journal article" date="2003" name="Science">
        <title>Collection, mapping, and annotation of over 28,000 cDNA clones from japonica rice.</title>
        <authorList>
            <consortium name="The rice full-length cDNA consortium"/>
        </authorList>
    </citation>
    <scope>NUCLEOTIDE SEQUENCE [LARGE SCALE MRNA]</scope>
    <source>
        <strain>cv. Nipponbare</strain>
    </source>
</reference>
<reference key="5">
    <citation type="journal article" date="2010" name="Plant Sci.">
        <title>Identification and expression analysis of PIN genes in rice.</title>
        <authorList>
            <person name="Miyashita Y."/>
            <person name="Takasugi T."/>
            <person name="Ito Y."/>
        </authorList>
    </citation>
    <scope>IDENTIFICATION</scope>
    <scope>TISSUE SPECIFICITY</scope>
</reference>
<reference key="6">
    <citation type="journal article" date="2009" name="Mol. Plant">
        <title>Expression of PIN genes in rice (Oryza sativa L.): tissue specificity and regulation by hormones.</title>
        <authorList>
            <person name="Wang J.R."/>
            <person name="Hu H."/>
            <person name="Wang G.H."/>
            <person name="Li J."/>
            <person name="Chen J.Y."/>
            <person name="Wu P."/>
        </authorList>
    </citation>
    <scope>TISSUE SPECIFICITY</scope>
</reference>
<name>PIN5C_ORYSJ</name>
<organism>
    <name type="scientific">Oryza sativa subsp. japonica</name>
    <name type="common">Rice</name>
    <dbReference type="NCBI Taxonomy" id="39947"/>
    <lineage>
        <taxon>Eukaryota</taxon>
        <taxon>Viridiplantae</taxon>
        <taxon>Streptophyta</taxon>
        <taxon>Embryophyta</taxon>
        <taxon>Tracheophyta</taxon>
        <taxon>Spermatophyta</taxon>
        <taxon>Magnoliopsida</taxon>
        <taxon>Liliopsida</taxon>
        <taxon>Poales</taxon>
        <taxon>Poaceae</taxon>
        <taxon>BOP clade</taxon>
        <taxon>Oryzoideae</taxon>
        <taxon>Oryzeae</taxon>
        <taxon>Oryzinae</taxon>
        <taxon>Oryza</taxon>
        <taxon>Oryza sativa</taxon>
    </lineage>
</organism>
<sequence>MIGWGDVYKVVGAMAPLYFALGLGYGSVRWWRFFTAEQCAAINTMVVYFSMPFFTFDFVVRTDPFAMNYRVIAADAVSKAIAIAAMAAWARTRCGCAAAKAGAQSWSITGFSLAALNNTLVVGVPLLDAMYGRWAQDLVVQIAVVQSMVWFPLLLMAFELRKAWVVGGGGGVGPAVMSSSSPPEKQSDVEMNGAVVAAPGGGGGVRLPFWATARTVGLKLARNPNVYASVLGVVWACIAYRWHLSLPGIVTGSLQVMSRTGTGMSMFSMGLFMGQQERVIACGAGLTALGMALRFVAGPLATLVGAAALGLRGDVLHLAIIQAALPQSIASFVFAKEYGLHADVLSTAVIFGTLISLPILIAYYAVLGFV</sequence>
<proteinExistence type="evidence at transcript level"/>
<dbReference type="EMBL" id="AP004015">
    <property type="protein sequence ID" value="BAD09105.1"/>
    <property type="molecule type" value="Genomic_DNA"/>
</dbReference>
<dbReference type="EMBL" id="AP008214">
    <property type="protein sequence ID" value="BAF24231.1"/>
    <property type="molecule type" value="Genomic_DNA"/>
</dbReference>
<dbReference type="EMBL" id="AP014964">
    <property type="protein sequence ID" value="BAT06374.1"/>
    <property type="molecule type" value="Genomic_DNA"/>
</dbReference>
<dbReference type="EMBL" id="AK100297">
    <property type="status" value="NOT_ANNOTATED_CDS"/>
    <property type="molecule type" value="mRNA"/>
</dbReference>
<dbReference type="EMBL" id="BR000836">
    <property type="protein sequence ID" value="FAA00685.1"/>
    <property type="molecule type" value="Genomic_DNA"/>
</dbReference>
<dbReference type="RefSeq" id="XP_015649102.1">
    <property type="nucleotide sequence ID" value="XM_015793616.1"/>
</dbReference>
<dbReference type="SMR" id="Q6ZIB5"/>
<dbReference type="FunCoup" id="Q6ZIB5">
    <property type="interactions" value="9"/>
</dbReference>
<dbReference type="PaxDb" id="39947-Q6ZIB5"/>
<dbReference type="EnsemblPlants" id="Os08t0529000-01">
    <property type="protein sequence ID" value="Os08t0529000-01"/>
    <property type="gene ID" value="Os08g0529000"/>
</dbReference>
<dbReference type="Gramene" id="Os08t0529000-01">
    <property type="protein sequence ID" value="Os08t0529000-01"/>
    <property type="gene ID" value="Os08g0529000"/>
</dbReference>
<dbReference type="KEGG" id="dosa:Os08g0529000"/>
<dbReference type="eggNOG" id="ENOG502QS1X">
    <property type="taxonomic scope" value="Eukaryota"/>
</dbReference>
<dbReference type="HOGENOM" id="CLU_019285_0_0_1"/>
<dbReference type="InParanoid" id="Q6ZIB5"/>
<dbReference type="OMA" id="LMAFELR"/>
<dbReference type="OrthoDB" id="2133778at2759"/>
<dbReference type="PlantReactome" id="R-OSA-5608118">
    <property type="pathway name" value="Auxin signalling"/>
</dbReference>
<dbReference type="PlantReactome" id="R-OSA-8858053">
    <property type="pathway name" value="Polar auxin transport"/>
</dbReference>
<dbReference type="Proteomes" id="UP000000763">
    <property type="component" value="Chromosome 8"/>
</dbReference>
<dbReference type="Proteomes" id="UP000059680">
    <property type="component" value="Chromosome 8"/>
</dbReference>
<dbReference type="GO" id="GO:0071944">
    <property type="term" value="C:cell periphery"/>
    <property type="evidence" value="ECO:0000250"/>
    <property type="project" value="UniProtKB"/>
</dbReference>
<dbReference type="GO" id="GO:0005783">
    <property type="term" value="C:endoplasmic reticulum"/>
    <property type="evidence" value="ECO:0000318"/>
    <property type="project" value="GO_Central"/>
</dbReference>
<dbReference type="GO" id="GO:0005886">
    <property type="term" value="C:plasma membrane"/>
    <property type="evidence" value="ECO:0000250"/>
    <property type="project" value="UniProtKB"/>
</dbReference>
<dbReference type="GO" id="GO:0010329">
    <property type="term" value="F:auxin efflux transmembrane transporter activity"/>
    <property type="evidence" value="ECO:0000250"/>
    <property type="project" value="UniProtKB"/>
</dbReference>
<dbReference type="GO" id="GO:0042802">
    <property type="term" value="F:identical protein binding"/>
    <property type="evidence" value="ECO:0000250"/>
    <property type="project" value="UniProtKB"/>
</dbReference>
<dbReference type="GO" id="GO:0042803">
    <property type="term" value="F:protein homodimerization activity"/>
    <property type="evidence" value="ECO:0000250"/>
    <property type="project" value="UniProtKB"/>
</dbReference>
<dbReference type="GO" id="GO:0010315">
    <property type="term" value="P:auxin export across the plasma membrane"/>
    <property type="evidence" value="ECO:0000250"/>
    <property type="project" value="UniProtKB"/>
</dbReference>
<dbReference type="GO" id="GO:0009926">
    <property type="term" value="P:auxin polar transport"/>
    <property type="evidence" value="ECO:0000318"/>
    <property type="project" value="GO_Central"/>
</dbReference>
<dbReference type="GO" id="GO:0009734">
    <property type="term" value="P:auxin-activated signaling pathway"/>
    <property type="evidence" value="ECO:0007669"/>
    <property type="project" value="UniProtKB-KW"/>
</dbReference>
<dbReference type="InterPro" id="IPR014024">
    <property type="entry name" value="Auxin_eff_plant"/>
</dbReference>
<dbReference type="InterPro" id="IPR051107">
    <property type="entry name" value="Auxin_Efflux_Carrier"/>
</dbReference>
<dbReference type="InterPro" id="IPR004776">
    <property type="entry name" value="Mem_transp_PIN-like"/>
</dbReference>
<dbReference type="NCBIfam" id="TIGR00946">
    <property type="entry name" value="2a69"/>
    <property type="match status" value="1"/>
</dbReference>
<dbReference type="PANTHER" id="PTHR31752">
    <property type="entry name" value="AUXIN EFFLUX CARRIER COMPONENT 1B-RELATED"/>
    <property type="match status" value="1"/>
</dbReference>
<dbReference type="PANTHER" id="PTHR31752:SF11">
    <property type="entry name" value="AUXIN EFFLUX CARRIER COMPONENT 5C-RELATED"/>
    <property type="match status" value="1"/>
</dbReference>
<dbReference type="Pfam" id="PF03547">
    <property type="entry name" value="Mem_trans"/>
    <property type="match status" value="1"/>
</dbReference>